<accession>Q3M999</accession>
<gene>
    <name evidence="1" type="primary">cobS</name>
    <name type="ordered locus">Ava_2824</name>
</gene>
<dbReference type="EC" id="2.7.8.26" evidence="1"/>
<dbReference type="EMBL" id="CP000117">
    <property type="protein sequence ID" value="ABA22437.1"/>
    <property type="molecule type" value="Genomic_DNA"/>
</dbReference>
<dbReference type="STRING" id="240292.Ava_2824"/>
<dbReference type="KEGG" id="ava:Ava_2824"/>
<dbReference type="eggNOG" id="COG0368">
    <property type="taxonomic scope" value="Bacteria"/>
</dbReference>
<dbReference type="HOGENOM" id="CLU_057426_3_1_3"/>
<dbReference type="UniPathway" id="UPA00148">
    <property type="reaction ID" value="UER00238"/>
</dbReference>
<dbReference type="Proteomes" id="UP000002533">
    <property type="component" value="Chromosome"/>
</dbReference>
<dbReference type="GO" id="GO:0005886">
    <property type="term" value="C:plasma membrane"/>
    <property type="evidence" value="ECO:0007669"/>
    <property type="project" value="UniProtKB-SubCell"/>
</dbReference>
<dbReference type="GO" id="GO:0051073">
    <property type="term" value="F:adenosylcobinamide-GDP ribazoletransferase activity"/>
    <property type="evidence" value="ECO:0007669"/>
    <property type="project" value="UniProtKB-UniRule"/>
</dbReference>
<dbReference type="GO" id="GO:0008818">
    <property type="term" value="F:cobalamin 5'-phosphate synthase activity"/>
    <property type="evidence" value="ECO:0007669"/>
    <property type="project" value="UniProtKB-UniRule"/>
</dbReference>
<dbReference type="GO" id="GO:0009236">
    <property type="term" value="P:cobalamin biosynthetic process"/>
    <property type="evidence" value="ECO:0007669"/>
    <property type="project" value="UniProtKB-UniRule"/>
</dbReference>
<dbReference type="HAMAP" id="MF_00719">
    <property type="entry name" value="CobS"/>
    <property type="match status" value="1"/>
</dbReference>
<dbReference type="InterPro" id="IPR003805">
    <property type="entry name" value="CobS"/>
</dbReference>
<dbReference type="NCBIfam" id="TIGR00317">
    <property type="entry name" value="cobS"/>
    <property type="match status" value="1"/>
</dbReference>
<dbReference type="PANTHER" id="PTHR34148">
    <property type="entry name" value="ADENOSYLCOBINAMIDE-GDP RIBAZOLETRANSFERASE"/>
    <property type="match status" value="1"/>
</dbReference>
<dbReference type="PANTHER" id="PTHR34148:SF1">
    <property type="entry name" value="ADENOSYLCOBINAMIDE-GDP RIBAZOLETRANSFERASE"/>
    <property type="match status" value="1"/>
</dbReference>
<dbReference type="Pfam" id="PF02654">
    <property type="entry name" value="CobS"/>
    <property type="match status" value="1"/>
</dbReference>
<organism>
    <name type="scientific">Trichormus variabilis (strain ATCC 29413 / PCC 7937)</name>
    <name type="common">Anabaena variabilis</name>
    <dbReference type="NCBI Taxonomy" id="240292"/>
    <lineage>
        <taxon>Bacteria</taxon>
        <taxon>Bacillati</taxon>
        <taxon>Cyanobacteriota</taxon>
        <taxon>Cyanophyceae</taxon>
        <taxon>Nostocales</taxon>
        <taxon>Nostocaceae</taxon>
        <taxon>Trichormus</taxon>
    </lineage>
</organism>
<protein>
    <recommendedName>
        <fullName evidence="1">Adenosylcobinamide-GDP ribazoletransferase</fullName>
        <ecNumber evidence="1">2.7.8.26</ecNumber>
    </recommendedName>
    <alternativeName>
        <fullName evidence="1">Cobalamin synthase</fullName>
    </alternativeName>
    <alternativeName>
        <fullName evidence="1">Cobalamin-5'-phosphate synthase</fullName>
    </alternativeName>
</protein>
<comment type="function">
    <text evidence="1">Joins adenosylcobinamide-GDP and alpha-ribazole to generate adenosylcobalamin (Ado-cobalamin). Also synthesizes adenosylcobalamin 5'-phosphate from adenosylcobinamide-GDP and alpha-ribazole 5'-phosphate.</text>
</comment>
<comment type="catalytic activity">
    <reaction evidence="1">
        <text>alpha-ribazole + adenosylcob(III)inamide-GDP = adenosylcob(III)alamin + GMP + H(+)</text>
        <dbReference type="Rhea" id="RHEA:16049"/>
        <dbReference type="ChEBI" id="CHEBI:10329"/>
        <dbReference type="ChEBI" id="CHEBI:15378"/>
        <dbReference type="ChEBI" id="CHEBI:18408"/>
        <dbReference type="ChEBI" id="CHEBI:58115"/>
        <dbReference type="ChEBI" id="CHEBI:60487"/>
        <dbReference type="EC" id="2.7.8.26"/>
    </reaction>
</comment>
<comment type="catalytic activity">
    <reaction evidence="1">
        <text>alpha-ribazole 5'-phosphate + adenosylcob(III)inamide-GDP = adenosylcob(III)alamin 5'-phosphate + GMP + H(+)</text>
        <dbReference type="Rhea" id="RHEA:23560"/>
        <dbReference type="ChEBI" id="CHEBI:15378"/>
        <dbReference type="ChEBI" id="CHEBI:57918"/>
        <dbReference type="ChEBI" id="CHEBI:58115"/>
        <dbReference type="ChEBI" id="CHEBI:60487"/>
        <dbReference type="ChEBI" id="CHEBI:60493"/>
        <dbReference type="EC" id="2.7.8.26"/>
    </reaction>
</comment>
<comment type="cofactor">
    <cofactor evidence="1">
        <name>Mg(2+)</name>
        <dbReference type="ChEBI" id="CHEBI:18420"/>
    </cofactor>
</comment>
<comment type="pathway">
    <text evidence="1">Cofactor biosynthesis; adenosylcobalamin biosynthesis; adenosylcobalamin from cob(II)yrinate a,c-diamide: step 7/7.</text>
</comment>
<comment type="subcellular location">
    <subcellularLocation>
        <location evidence="1">Cell inner membrane</location>
        <topology evidence="1">Multi-pass membrane protein</topology>
    </subcellularLocation>
</comment>
<comment type="similarity">
    <text evidence="1">Belongs to the CobS family.</text>
</comment>
<feature type="chain" id="PRO_1000045757" description="Adenosylcobinamide-GDP ribazoletransferase">
    <location>
        <begin position="1"/>
        <end position="252"/>
    </location>
</feature>
<feature type="transmembrane region" description="Helical" evidence="1">
    <location>
        <begin position="4"/>
        <end position="24"/>
    </location>
</feature>
<feature type="transmembrane region" description="Helical" evidence="1">
    <location>
        <begin position="35"/>
        <end position="55"/>
    </location>
</feature>
<feature type="transmembrane region" description="Helical" evidence="1">
    <location>
        <begin position="65"/>
        <end position="85"/>
    </location>
</feature>
<feature type="transmembrane region" description="Helical" evidence="1">
    <location>
        <begin position="102"/>
        <end position="122"/>
    </location>
</feature>
<feature type="transmembrane region" description="Helical" evidence="1">
    <location>
        <begin position="178"/>
        <end position="198"/>
    </location>
</feature>
<feature type="transmembrane region" description="Helical" evidence="1">
    <location>
        <begin position="201"/>
        <end position="221"/>
    </location>
</feature>
<feature type="transmembrane region" description="Helical" evidence="1">
    <location>
        <begin position="232"/>
        <end position="252"/>
    </location>
</feature>
<sequence length="252" mass="27031">MVKLLLLNLLASIIFYTSIPLPYIKGLDFQKVARLVPMVGLIIGVILGLLDGGMNYLGMPVLTRSALVVALWIFITGGLHLDGAMDTADGLAVGDPERRLQVMADSATGAFGAMSAIAILLLKTSALTEIGEYRWLVLMAACGWGRWGQQVAIACYPYLKATGKGAFHKQAIRSYKDLLPGLCLMVAVSSLFWLVNNHHLLITVVGLITGSAIASLTAAWFNHKLGGHTGDTYGAVVEWTEALFLCVLTILT</sequence>
<evidence type="ECO:0000255" key="1">
    <source>
        <dbReference type="HAMAP-Rule" id="MF_00719"/>
    </source>
</evidence>
<proteinExistence type="inferred from homology"/>
<keyword id="KW-0997">Cell inner membrane</keyword>
<keyword id="KW-1003">Cell membrane</keyword>
<keyword id="KW-0169">Cobalamin biosynthesis</keyword>
<keyword id="KW-0460">Magnesium</keyword>
<keyword id="KW-0472">Membrane</keyword>
<keyword id="KW-0808">Transferase</keyword>
<keyword id="KW-0812">Transmembrane</keyword>
<keyword id="KW-1133">Transmembrane helix</keyword>
<reference key="1">
    <citation type="journal article" date="2014" name="Stand. Genomic Sci.">
        <title>Complete genome sequence of Anabaena variabilis ATCC 29413.</title>
        <authorList>
            <person name="Thiel T."/>
            <person name="Pratte B.S."/>
            <person name="Zhong J."/>
            <person name="Goodwin L."/>
            <person name="Copeland A."/>
            <person name="Lucas S."/>
            <person name="Han C."/>
            <person name="Pitluck S."/>
            <person name="Land M.L."/>
            <person name="Kyrpides N.C."/>
            <person name="Woyke T."/>
        </authorList>
    </citation>
    <scope>NUCLEOTIDE SEQUENCE [LARGE SCALE GENOMIC DNA]</scope>
    <source>
        <strain>ATCC 29413 / PCC 7937</strain>
    </source>
</reference>
<name>COBS_TRIV2</name>